<feature type="chain" id="PRO_0000237246" description="Large ribosomal subunit protein uL2">
    <location>
        <begin position="1"/>
        <end position="277"/>
    </location>
</feature>
<feature type="region of interest" description="Disordered" evidence="2">
    <location>
        <begin position="36"/>
        <end position="55"/>
    </location>
</feature>
<feature type="region of interest" description="Disordered" evidence="2">
    <location>
        <begin position="213"/>
        <end position="277"/>
    </location>
</feature>
<gene>
    <name evidence="1" type="primary">rplB</name>
    <name type="ordered locus">SAUSA300_2201</name>
</gene>
<protein>
    <recommendedName>
        <fullName evidence="1">Large ribosomal subunit protein uL2</fullName>
    </recommendedName>
    <alternativeName>
        <fullName evidence="3">50S ribosomal protein L2</fullName>
    </alternativeName>
</protein>
<proteinExistence type="inferred from homology"/>
<name>RL2_STAA3</name>
<comment type="function">
    <text evidence="1">One of the primary rRNA binding proteins. Required for association of the 30S and 50S subunits to form the 70S ribosome, for tRNA binding and peptide bond formation. It has been suggested to have peptidyltransferase activity; this is somewhat controversial. Makes several contacts with the 16S rRNA in the 70S ribosome.</text>
</comment>
<comment type="subunit">
    <text evidence="1">Part of the 50S ribosomal subunit. Forms a bridge to the 30S subunit in the 70S ribosome.</text>
</comment>
<comment type="similarity">
    <text evidence="1">Belongs to the universal ribosomal protein uL2 family.</text>
</comment>
<reference key="1">
    <citation type="journal article" date="2006" name="Lancet">
        <title>Complete genome sequence of USA300, an epidemic clone of community-acquired meticillin-resistant Staphylococcus aureus.</title>
        <authorList>
            <person name="Diep B.A."/>
            <person name="Gill S.R."/>
            <person name="Chang R.F."/>
            <person name="Phan T.H."/>
            <person name="Chen J.H."/>
            <person name="Davidson M.G."/>
            <person name="Lin F."/>
            <person name="Lin J."/>
            <person name="Carleton H.A."/>
            <person name="Mongodin E.F."/>
            <person name="Sensabaugh G.F."/>
            <person name="Perdreau-Remington F."/>
        </authorList>
    </citation>
    <scope>NUCLEOTIDE SEQUENCE [LARGE SCALE GENOMIC DNA]</scope>
    <source>
        <strain>USA300</strain>
    </source>
</reference>
<evidence type="ECO:0000255" key="1">
    <source>
        <dbReference type="HAMAP-Rule" id="MF_01320"/>
    </source>
</evidence>
<evidence type="ECO:0000256" key="2">
    <source>
        <dbReference type="SAM" id="MobiDB-lite"/>
    </source>
</evidence>
<evidence type="ECO:0000305" key="3"/>
<accession>Q2FEP2</accession>
<dbReference type="EMBL" id="CP000255">
    <property type="protein sequence ID" value="ABD22822.1"/>
    <property type="molecule type" value="Genomic_DNA"/>
</dbReference>
<dbReference type="RefSeq" id="WP_000985472.1">
    <property type="nucleotide sequence ID" value="NZ_CP027476.1"/>
</dbReference>
<dbReference type="SMR" id="Q2FEP2"/>
<dbReference type="GeneID" id="98346559"/>
<dbReference type="KEGG" id="saa:SAUSA300_2201"/>
<dbReference type="HOGENOM" id="CLU_036235_2_1_9"/>
<dbReference type="Proteomes" id="UP000001939">
    <property type="component" value="Chromosome"/>
</dbReference>
<dbReference type="GO" id="GO:0015934">
    <property type="term" value="C:large ribosomal subunit"/>
    <property type="evidence" value="ECO:0007669"/>
    <property type="project" value="InterPro"/>
</dbReference>
<dbReference type="GO" id="GO:0019843">
    <property type="term" value="F:rRNA binding"/>
    <property type="evidence" value="ECO:0007669"/>
    <property type="project" value="UniProtKB-UniRule"/>
</dbReference>
<dbReference type="GO" id="GO:0003735">
    <property type="term" value="F:structural constituent of ribosome"/>
    <property type="evidence" value="ECO:0007669"/>
    <property type="project" value="InterPro"/>
</dbReference>
<dbReference type="GO" id="GO:0016740">
    <property type="term" value="F:transferase activity"/>
    <property type="evidence" value="ECO:0007669"/>
    <property type="project" value="InterPro"/>
</dbReference>
<dbReference type="GO" id="GO:0002181">
    <property type="term" value="P:cytoplasmic translation"/>
    <property type="evidence" value="ECO:0007669"/>
    <property type="project" value="TreeGrafter"/>
</dbReference>
<dbReference type="FunFam" id="2.30.30.30:FF:000001">
    <property type="entry name" value="50S ribosomal protein L2"/>
    <property type="match status" value="1"/>
</dbReference>
<dbReference type="FunFam" id="2.40.50.140:FF:000003">
    <property type="entry name" value="50S ribosomal protein L2"/>
    <property type="match status" value="1"/>
</dbReference>
<dbReference type="FunFam" id="4.10.950.10:FF:000001">
    <property type="entry name" value="50S ribosomal protein L2"/>
    <property type="match status" value="1"/>
</dbReference>
<dbReference type="Gene3D" id="2.30.30.30">
    <property type="match status" value="1"/>
</dbReference>
<dbReference type="Gene3D" id="2.40.50.140">
    <property type="entry name" value="Nucleic acid-binding proteins"/>
    <property type="match status" value="1"/>
</dbReference>
<dbReference type="Gene3D" id="4.10.950.10">
    <property type="entry name" value="Ribosomal protein L2, domain 3"/>
    <property type="match status" value="1"/>
</dbReference>
<dbReference type="HAMAP" id="MF_01320_B">
    <property type="entry name" value="Ribosomal_uL2_B"/>
    <property type="match status" value="1"/>
</dbReference>
<dbReference type="InterPro" id="IPR012340">
    <property type="entry name" value="NA-bd_OB-fold"/>
</dbReference>
<dbReference type="InterPro" id="IPR014722">
    <property type="entry name" value="Rib_uL2_dom2"/>
</dbReference>
<dbReference type="InterPro" id="IPR002171">
    <property type="entry name" value="Ribosomal_uL2"/>
</dbReference>
<dbReference type="InterPro" id="IPR005880">
    <property type="entry name" value="Ribosomal_uL2_bac/org-type"/>
</dbReference>
<dbReference type="InterPro" id="IPR022669">
    <property type="entry name" value="Ribosomal_uL2_C"/>
</dbReference>
<dbReference type="InterPro" id="IPR022671">
    <property type="entry name" value="Ribosomal_uL2_CS"/>
</dbReference>
<dbReference type="InterPro" id="IPR014726">
    <property type="entry name" value="Ribosomal_uL2_dom3"/>
</dbReference>
<dbReference type="InterPro" id="IPR022666">
    <property type="entry name" value="Ribosomal_uL2_RNA-bd_dom"/>
</dbReference>
<dbReference type="InterPro" id="IPR008991">
    <property type="entry name" value="Translation_prot_SH3-like_sf"/>
</dbReference>
<dbReference type="NCBIfam" id="TIGR01171">
    <property type="entry name" value="rplB_bact"/>
    <property type="match status" value="1"/>
</dbReference>
<dbReference type="PANTHER" id="PTHR13691:SF5">
    <property type="entry name" value="LARGE RIBOSOMAL SUBUNIT PROTEIN UL2M"/>
    <property type="match status" value="1"/>
</dbReference>
<dbReference type="PANTHER" id="PTHR13691">
    <property type="entry name" value="RIBOSOMAL PROTEIN L2"/>
    <property type="match status" value="1"/>
</dbReference>
<dbReference type="Pfam" id="PF00181">
    <property type="entry name" value="Ribosomal_L2"/>
    <property type="match status" value="1"/>
</dbReference>
<dbReference type="Pfam" id="PF03947">
    <property type="entry name" value="Ribosomal_L2_C"/>
    <property type="match status" value="1"/>
</dbReference>
<dbReference type="PIRSF" id="PIRSF002158">
    <property type="entry name" value="Ribosomal_L2"/>
    <property type="match status" value="1"/>
</dbReference>
<dbReference type="SMART" id="SM01383">
    <property type="entry name" value="Ribosomal_L2"/>
    <property type="match status" value="1"/>
</dbReference>
<dbReference type="SMART" id="SM01382">
    <property type="entry name" value="Ribosomal_L2_C"/>
    <property type="match status" value="1"/>
</dbReference>
<dbReference type="SUPFAM" id="SSF50249">
    <property type="entry name" value="Nucleic acid-binding proteins"/>
    <property type="match status" value="1"/>
</dbReference>
<dbReference type="SUPFAM" id="SSF50104">
    <property type="entry name" value="Translation proteins SH3-like domain"/>
    <property type="match status" value="1"/>
</dbReference>
<dbReference type="PROSITE" id="PS00467">
    <property type="entry name" value="RIBOSOMAL_L2"/>
    <property type="match status" value="1"/>
</dbReference>
<organism>
    <name type="scientific">Staphylococcus aureus (strain USA300)</name>
    <dbReference type="NCBI Taxonomy" id="367830"/>
    <lineage>
        <taxon>Bacteria</taxon>
        <taxon>Bacillati</taxon>
        <taxon>Bacillota</taxon>
        <taxon>Bacilli</taxon>
        <taxon>Bacillales</taxon>
        <taxon>Staphylococcaceae</taxon>
        <taxon>Staphylococcus</taxon>
    </lineage>
</organism>
<keyword id="KW-0687">Ribonucleoprotein</keyword>
<keyword id="KW-0689">Ribosomal protein</keyword>
<keyword id="KW-0694">RNA-binding</keyword>
<keyword id="KW-0699">rRNA-binding</keyword>
<sequence>MAIKKYKPITNGRRNMTSLDFAEITKTTPEKSLLKPLPKKAGRNNQGKLTVRHHGGGHKRQYRVIDFKRNKDGINAKVDSIQYDPNRSANIALVVYADGEKRYIIAPKGLEVGQIVESGAEADIKVGNALPLQNIPVGTVVHNIELKPGKGGQIARSAGASAQVLGKEGKYVLIRLRSGEVRMILSTCRATIGQVGNLQHELVNVGKAGRSRWKGIRPTVRGSVMNPNDHPHGGGEGRAPIGRPSPMSPWGKPTLGKKTRRGKKSSDKLIVRGRKKK</sequence>